<dbReference type="EMBL" id="M14849">
    <property type="protein sequence ID" value="AAA25955.1"/>
    <property type="molecule type" value="Genomic_DNA"/>
</dbReference>
<dbReference type="EMBL" id="X02402">
    <property type="protein sequence ID" value="CAA26248.1"/>
    <property type="molecule type" value="Genomic_DNA"/>
</dbReference>
<dbReference type="EMBL" id="S67807">
    <property type="protein sequence ID" value="AAM26730.1"/>
    <property type="molecule type" value="Genomic_DNA"/>
</dbReference>
<dbReference type="PIR" id="A24603">
    <property type="entry name" value="YQPSPA"/>
</dbReference>
<dbReference type="RefSeq" id="WP_058135760.1">
    <property type="nucleotide sequence ID" value="NZ_LLUB01000003.1"/>
</dbReference>
<dbReference type="PDB" id="1DZO">
    <property type="method" value="X-ray"/>
    <property type="resolution" value="1.63 A"/>
    <property type="chains" value="A=35-150"/>
</dbReference>
<dbReference type="PDB" id="1NIL">
    <property type="method" value="NMR"/>
    <property type="chains" value="A=134-149"/>
</dbReference>
<dbReference type="PDB" id="1NIM">
    <property type="method" value="NMR"/>
    <property type="chains" value="A=134-149"/>
</dbReference>
<dbReference type="PDB" id="1OQW">
    <property type="method" value="X-ray"/>
    <property type="resolution" value="2.00 A"/>
    <property type="chains" value="A/B=7-150"/>
</dbReference>
<dbReference type="PDB" id="1PAJ">
    <property type="method" value="NMR"/>
    <property type="chains" value="A=134-149"/>
</dbReference>
<dbReference type="PDB" id="1PAK">
    <property type="method" value="NMR"/>
    <property type="chains" value="A=134-149"/>
</dbReference>
<dbReference type="PDB" id="1X6P">
    <property type="method" value="X-ray"/>
    <property type="resolution" value="1.63 A"/>
    <property type="chains" value="A=35-150"/>
</dbReference>
<dbReference type="PDB" id="1X6Q">
    <property type="method" value="X-ray"/>
    <property type="resolution" value="1.51 A"/>
    <property type="chains" value="A=35-150"/>
</dbReference>
<dbReference type="PDB" id="1X6R">
    <property type="method" value="X-ray"/>
    <property type="resolution" value="1.82 A"/>
    <property type="chains" value="A=35-150"/>
</dbReference>
<dbReference type="PDB" id="1X6X">
    <property type="method" value="X-ray"/>
    <property type="resolution" value="0.96 A"/>
    <property type="chains" value="X=35-150"/>
</dbReference>
<dbReference type="PDB" id="1X6Y">
    <property type="method" value="X-ray"/>
    <property type="resolution" value="1.55 A"/>
    <property type="chains" value="A=35-150"/>
</dbReference>
<dbReference type="PDB" id="1X6Z">
    <property type="method" value="X-ray"/>
    <property type="resolution" value="0.78 A"/>
    <property type="chains" value="A=35-150"/>
</dbReference>
<dbReference type="PDB" id="2PY0">
    <property type="method" value="X-ray"/>
    <property type="resolution" value="1.35 A"/>
    <property type="chains" value="A=35-149"/>
</dbReference>
<dbReference type="PDB" id="5VXY">
    <property type="method" value="EM"/>
    <property type="resolution" value="8.00 A"/>
    <property type="chains" value="A/B/C/D/E/F/G/H/I/J/K/L/M/N/O/P/Q/R/S/T/U=7-150"/>
</dbReference>
<dbReference type="PDBsum" id="1DZO"/>
<dbReference type="PDBsum" id="1NIL"/>
<dbReference type="PDBsum" id="1NIM"/>
<dbReference type="PDBsum" id="1OQW"/>
<dbReference type="PDBsum" id="1PAJ"/>
<dbReference type="PDBsum" id="1PAK"/>
<dbReference type="PDBsum" id="1X6P"/>
<dbReference type="PDBsum" id="1X6Q"/>
<dbReference type="PDBsum" id="1X6R"/>
<dbReference type="PDBsum" id="1X6X"/>
<dbReference type="PDBsum" id="1X6Y"/>
<dbReference type="PDBsum" id="1X6Z"/>
<dbReference type="PDBsum" id="2PY0"/>
<dbReference type="PDBsum" id="5VXY"/>
<dbReference type="EMDB" id="EMD-8740"/>
<dbReference type="SMR" id="P02973"/>
<dbReference type="IntAct" id="P02973">
    <property type="interactions" value="1"/>
</dbReference>
<dbReference type="iPTMnet" id="P02973"/>
<dbReference type="EvolutionaryTrace" id="P02973"/>
<dbReference type="GO" id="GO:0016020">
    <property type="term" value="C:membrane"/>
    <property type="evidence" value="ECO:0007669"/>
    <property type="project" value="UniProtKB-SubCell"/>
</dbReference>
<dbReference type="GO" id="GO:0044096">
    <property type="term" value="C:type IV pilus"/>
    <property type="evidence" value="ECO:0007669"/>
    <property type="project" value="TreeGrafter"/>
</dbReference>
<dbReference type="GO" id="GO:0007155">
    <property type="term" value="P:cell adhesion"/>
    <property type="evidence" value="ECO:0007669"/>
    <property type="project" value="InterPro"/>
</dbReference>
<dbReference type="GO" id="GO:0043107">
    <property type="term" value="P:type IV pilus-dependent motility"/>
    <property type="evidence" value="ECO:0007669"/>
    <property type="project" value="TreeGrafter"/>
</dbReference>
<dbReference type="Gene3D" id="3.30.700.10">
    <property type="entry name" value="Glycoprotein, Type 4 Pilin"/>
    <property type="match status" value="1"/>
</dbReference>
<dbReference type="InterPro" id="IPR012902">
    <property type="entry name" value="N_methyl_site"/>
</dbReference>
<dbReference type="InterPro" id="IPR001082">
    <property type="entry name" value="Pilin"/>
</dbReference>
<dbReference type="InterPro" id="IPR045584">
    <property type="entry name" value="Pilin-like"/>
</dbReference>
<dbReference type="InterPro" id="IPR050470">
    <property type="entry name" value="T4P/T2SS_Core"/>
</dbReference>
<dbReference type="NCBIfam" id="TIGR02532">
    <property type="entry name" value="IV_pilin_GFxxxE"/>
    <property type="match status" value="1"/>
</dbReference>
<dbReference type="PANTHER" id="PTHR30093">
    <property type="entry name" value="GENERAL SECRETION PATHWAY PROTEIN G"/>
    <property type="match status" value="1"/>
</dbReference>
<dbReference type="PANTHER" id="PTHR30093:SF34">
    <property type="entry name" value="PREPILIN PEPTIDASE-DEPENDENT PROTEIN D"/>
    <property type="match status" value="1"/>
</dbReference>
<dbReference type="Pfam" id="PF07963">
    <property type="entry name" value="N_methyl"/>
    <property type="match status" value="1"/>
</dbReference>
<dbReference type="Pfam" id="PF00114">
    <property type="entry name" value="Pilin"/>
    <property type="match status" value="1"/>
</dbReference>
<dbReference type="SUPFAM" id="SSF54523">
    <property type="entry name" value="Pili subunits"/>
    <property type="match status" value="1"/>
</dbReference>
<dbReference type="PROSITE" id="PS00409">
    <property type="entry name" value="PROKAR_NTER_METHYL"/>
    <property type="match status" value="1"/>
</dbReference>
<proteinExistence type="evidence at protein level"/>
<keyword id="KW-0002">3D-structure</keyword>
<keyword id="KW-0903">Direct protein sequencing</keyword>
<keyword id="KW-1015">Disulfide bond</keyword>
<keyword id="KW-0281">Fimbrium</keyword>
<keyword id="KW-0472">Membrane</keyword>
<keyword id="KW-0488">Methylation</keyword>
<keyword id="KW-0812">Transmembrane</keyword>
<keyword id="KW-1133">Transmembrane helix</keyword>
<comment type="subunit">
    <text>The pili are polar flexible filaments of about 5.4 nanometers diameter and 2.5 micrometers average length; they consist of only a single polypeptide chain arranged in a helical configuration of five subunits per turn in the assembled pilus.</text>
</comment>
<comment type="subcellular location">
    <subcellularLocation>
        <location>Fimbrium</location>
    </subcellularLocation>
    <subcellularLocation>
        <location evidence="1">Membrane</location>
        <topology evidence="1">Single-pass membrane protein</topology>
    </subcellularLocation>
</comment>
<comment type="similarity">
    <text evidence="4">Belongs to the N-Me-Phe pilin family.</text>
</comment>
<sequence length="150" mass="15650">MKAQKGFTLIELMIVVAIIGILAAIAIPQYQNYVARSEGASALASVNPLKTTVEEALSRGWSVKSGTGTEDATKKEVPLGVAADANKLGTIALKPDPADGTADITLTFTMGGAGPKNKGKIITLTRTAADGLWKCTSDQDEQFIPKGCSR</sequence>
<reference key="1">
    <citation type="journal article" date="1985" name="FEBS Lett.">
        <title>Cloning and sequencing of the Pseudomonas aeruginosa PAK pilin gene.</title>
        <authorList>
            <person name="Pasloske B.L."/>
            <person name="Finlay B.B."/>
            <person name="Paranchych W."/>
        </authorList>
    </citation>
    <scope>NUCLEOTIDE SEQUENCE [GENOMIC DNA]</scope>
    <source>
        <strain>PAK</strain>
    </source>
</reference>
<reference key="2">
    <citation type="journal article" date="1986" name="J. Biol. Chem.">
        <title>Nucleotide sequence and transcriptional initiation site of two Pseudomonas aeruginosa pilin genes.</title>
        <authorList>
            <person name="Johnson K."/>
            <person name="Parker M.L."/>
            <person name="Lory S."/>
        </authorList>
    </citation>
    <scope>NUCLEOTIDE SEQUENCE [GENOMIC DNA]</scope>
    <source>
        <strain>PAK</strain>
    </source>
</reference>
<reference key="3">
    <citation type="journal article" date="1983" name="FEBS Lett.">
        <title>Amino acid sequence of pilin isolated from Pseudomonas aeruginosa PAK.</title>
        <authorList>
            <person name="Sastry P.A."/>
            <person name="Pearlstone J.R."/>
            <person name="Smillie L.B."/>
            <person name="Paranchych W."/>
        </authorList>
    </citation>
    <scope>PROTEIN SEQUENCE OF 7-150</scope>
    <scope>METHYLATION AT PHE-7</scope>
    <source>
        <strain>PAK</strain>
    </source>
</reference>
<reference key="4">
    <citation type="journal article" date="1994" name="J. Infect. Dis.">
        <title>A multicenter comparison of methods for typing strains of Pseudomonas aeruginosa predominantly from patients with cystic fibrosis.</title>
        <authorList>
            <consortium name="International Pseudomonas aeruginosa typing study group"/>
        </authorList>
    </citation>
    <scope>NUCLEOTIDE SEQUENCE [GENOMIC DNA] OF 128-150</scope>
</reference>
<reference key="5">
    <citation type="journal article" date="1993" name="Biochemistry">
        <title>NMR solution structure and flexibility of a peptide antigen representing the receptor binding domain of Pseudomonas aeruginosa.</title>
        <authorList>
            <person name="McInnes C."/>
            <person name="Soennichsen F.D."/>
            <person name="Kay C.M."/>
            <person name="Hodges R.S."/>
            <person name="Sykes B.D."/>
        </authorList>
    </citation>
    <scope>STRUCTURE BY NMR OF 134-150</scope>
</reference>
<evidence type="ECO:0000255" key="1"/>
<evidence type="ECO:0000255" key="2">
    <source>
        <dbReference type="PROSITE-ProRule" id="PRU01070"/>
    </source>
</evidence>
<evidence type="ECO:0000269" key="3">
    <source>
    </source>
</evidence>
<evidence type="ECO:0000305" key="4"/>
<evidence type="ECO:0007829" key="5">
    <source>
        <dbReference type="PDB" id="1PAJ"/>
    </source>
</evidence>
<evidence type="ECO:0007829" key="6">
    <source>
        <dbReference type="PDB" id="1X6Z"/>
    </source>
</evidence>
<name>FMPA_PSEAI</name>
<gene>
    <name type="primary">pilA</name>
    <name type="synonym">fimA</name>
</gene>
<accession>P02973</accession>
<accession>Q53390</accession>
<feature type="propeptide" id="PRO_0000024176" description="Leader sequence" evidence="2 3">
    <location>
        <begin position="1"/>
        <end position="6"/>
    </location>
</feature>
<feature type="chain" id="PRO_0000024177" description="Fimbrial protein">
    <location>
        <begin position="7"/>
        <end position="150"/>
    </location>
</feature>
<feature type="transmembrane region" description="Helical" evidence="1">
    <location>
        <begin position="7"/>
        <end position="27"/>
    </location>
</feature>
<feature type="modified residue" description="N-methylphenylalanine" evidence="2 3">
    <location>
        <position position="7"/>
    </location>
</feature>
<feature type="disulfide bond">
    <location>
        <begin position="135"/>
        <end position="148"/>
    </location>
</feature>
<feature type="sequence conflict" description="In Ref. 3; AA sequence." evidence="4" ref="3">
    <original>T</original>
    <variation>TS</variation>
    <location>
        <position position="90"/>
    </location>
</feature>
<feature type="sequence conflict" description="In Ref. 3; AA sequence." evidence="4" ref="3">
    <original>TAD</original>
    <variation>DTA</variation>
    <location>
        <begin position="101"/>
        <end position="103"/>
    </location>
</feature>
<feature type="sequence conflict" description="In Ref. 4; AAM26730." evidence="4" ref="4">
    <original>A</original>
    <variation>D</variation>
    <location>
        <position position="128"/>
    </location>
</feature>
<feature type="sequence conflict" description="In Ref. 2; AAA25955." evidence="4" ref="2">
    <original>R</original>
    <variation>K</variation>
    <location>
        <position position="150"/>
    </location>
</feature>
<feature type="helix" evidence="6">
    <location>
        <begin position="35"/>
        <end position="46"/>
    </location>
</feature>
<feature type="helix" evidence="6">
    <location>
        <begin position="49"/>
        <end position="58"/>
    </location>
</feature>
<feature type="strand" evidence="6">
    <location>
        <begin position="62"/>
        <end position="68"/>
    </location>
</feature>
<feature type="turn" evidence="6">
    <location>
        <begin position="72"/>
        <end position="75"/>
    </location>
</feature>
<feature type="strand" evidence="6">
    <location>
        <begin position="76"/>
        <end position="78"/>
    </location>
</feature>
<feature type="strand" evidence="6">
    <location>
        <begin position="90"/>
        <end position="98"/>
    </location>
</feature>
<feature type="strand" evidence="6">
    <location>
        <begin position="100"/>
        <end position="102"/>
    </location>
</feature>
<feature type="strand" evidence="6">
    <location>
        <begin position="104"/>
        <end position="109"/>
    </location>
</feature>
<feature type="turn" evidence="6">
    <location>
        <begin position="115"/>
        <end position="119"/>
    </location>
</feature>
<feature type="strand" evidence="6">
    <location>
        <begin position="121"/>
        <end position="126"/>
    </location>
</feature>
<feature type="turn" evidence="6">
    <location>
        <begin position="128"/>
        <end position="130"/>
    </location>
</feature>
<feature type="strand" evidence="6">
    <location>
        <begin position="133"/>
        <end position="137"/>
    </location>
</feature>
<feature type="helix" evidence="6">
    <location>
        <begin position="141"/>
        <end position="143"/>
    </location>
</feature>
<feature type="turn" evidence="5">
    <location>
        <begin position="146"/>
        <end position="148"/>
    </location>
</feature>
<protein>
    <recommendedName>
        <fullName>Fimbrial protein</fullName>
    </recommendedName>
    <alternativeName>
        <fullName>Pilin</fullName>
    </alternativeName>
</protein>
<organism>
    <name type="scientific">Pseudomonas aeruginosa</name>
    <dbReference type="NCBI Taxonomy" id="287"/>
    <lineage>
        <taxon>Bacteria</taxon>
        <taxon>Pseudomonadati</taxon>
        <taxon>Pseudomonadota</taxon>
        <taxon>Gammaproteobacteria</taxon>
        <taxon>Pseudomonadales</taxon>
        <taxon>Pseudomonadaceae</taxon>
        <taxon>Pseudomonas</taxon>
    </lineage>
</organism>